<organism>
    <name type="scientific">Mus musculus</name>
    <name type="common">Mouse</name>
    <dbReference type="NCBI Taxonomy" id="10090"/>
    <lineage>
        <taxon>Eukaryota</taxon>
        <taxon>Metazoa</taxon>
        <taxon>Chordata</taxon>
        <taxon>Craniata</taxon>
        <taxon>Vertebrata</taxon>
        <taxon>Euteleostomi</taxon>
        <taxon>Mammalia</taxon>
        <taxon>Eutheria</taxon>
        <taxon>Euarchontoglires</taxon>
        <taxon>Glires</taxon>
        <taxon>Rodentia</taxon>
        <taxon>Myomorpha</taxon>
        <taxon>Muroidea</taxon>
        <taxon>Muridae</taxon>
        <taxon>Murinae</taxon>
        <taxon>Mus</taxon>
        <taxon>Mus</taxon>
    </lineage>
</organism>
<evidence type="ECO:0000250" key="1">
    <source>
        <dbReference type="UniProtKB" id="Q14008"/>
    </source>
</evidence>
<evidence type="ECO:0000255" key="2"/>
<evidence type="ECO:0000256" key="3">
    <source>
        <dbReference type="SAM" id="MobiDB-lite"/>
    </source>
</evidence>
<evidence type="ECO:0000269" key="4">
    <source>
    </source>
</evidence>
<evidence type="ECO:0000269" key="5">
    <source>
    </source>
</evidence>
<evidence type="ECO:0000303" key="6">
    <source>
    </source>
</evidence>
<evidence type="ECO:0000305" key="7"/>
<evidence type="ECO:0000312" key="8">
    <source>
        <dbReference type="EMBL" id="AAH17140.1"/>
    </source>
</evidence>
<evidence type="ECO:0000312" key="9">
    <source>
        <dbReference type="EMBL" id="AAH89032.1"/>
    </source>
</evidence>
<evidence type="ECO:0000312" key="10">
    <source>
        <dbReference type="EMBL" id="BAB29779.1"/>
    </source>
</evidence>
<evidence type="ECO:0000312" key="11">
    <source>
        <dbReference type="EMBL" id="BAE29125.1"/>
    </source>
</evidence>
<evidence type="ECO:0000312" key="12">
    <source>
        <dbReference type="EMBL" id="BAE38422.1"/>
    </source>
</evidence>
<evidence type="ECO:0000312" key="13">
    <source>
        <dbReference type="MGI" id="MGI:1923036"/>
    </source>
</evidence>
<evidence type="ECO:0007744" key="14">
    <source>
    </source>
</evidence>
<accession>A2AGT5</accession>
<accession>A0PJ77</accession>
<accession>A2AGT6</accession>
<accession>B2RRC4</accession>
<accession>Q0VGR0</accession>
<accession>Q3TML9</accession>
<accession>Q3UDY6</accession>
<accession>Q4VAE7</accession>
<accession>Q9CUN0</accession>
<keyword id="KW-0007">Acetylation</keyword>
<keyword id="KW-0025">Alternative splicing</keyword>
<keyword id="KW-0131">Cell cycle</keyword>
<keyword id="KW-0132">Cell division</keyword>
<keyword id="KW-0137">Centromere</keyword>
<keyword id="KW-0158">Chromosome</keyword>
<keyword id="KW-0963">Cytoplasm</keyword>
<keyword id="KW-0206">Cytoskeleton</keyword>
<keyword id="KW-0995">Kinetochore</keyword>
<keyword id="KW-0498">Mitosis</keyword>
<keyword id="KW-0597">Phosphoprotein</keyword>
<keyword id="KW-1185">Reference proteome</keyword>
<keyword id="KW-0677">Repeat</keyword>
<protein>
    <recommendedName>
        <fullName>Cytoskeleton-associated protein 5</fullName>
    </recommendedName>
</protein>
<name>CKAP5_MOUSE</name>
<reference key="1">
    <citation type="journal article" date="2009" name="PLoS Biol.">
        <title>Lineage-specific biology revealed by a finished genome assembly of the mouse.</title>
        <authorList>
            <person name="Church D.M."/>
            <person name="Goodstadt L."/>
            <person name="Hillier L.W."/>
            <person name="Zody M.C."/>
            <person name="Goldstein S."/>
            <person name="She X."/>
            <person name="Bult C.J."/>
            <person name="Agarwala R."/>
            <person name="Cherry J.L."/>
            <person name="DiCuccio M."/>
            <person name="Hlavina W."/>
            <person name="Kapustin Y."/>
            <person name="Meric P."/>
            <person name="Maglott D."/>
            <person name="Birtle Z."/>
            <person name="Marques A.C."/>
            <person name="Graves T."/>
            <person name="Zhou S."/>
            <person name="Teague B."/>
            <person name="Potamousis K."/>
            <person name="Churas C."/>
            <person name="Place M."/>
            <person name="Herschleb J."/>
            <person name="Runnheim R."/>
            <person name="Forrest D."/>
            <person name="Amos-Landgraf J."/>
            <person name="Schwartz D.C."/>
            <person name="Cheng Z."/>
            <person name="Lindblad-Toh K."/>
            <person name="Eichler E.E."/>
            <person name="Ponting C.P."/>
        </authorList>
    </citation>
    <scope>NUCLEOTIDE SEQUENCE [LARGE SCALE GENOMIC DNA]</scope>
    <source>
        <strain>C57BL/6J</strain>
    </source>
</reference>
<reference evidence="7 9" key="2">
    <citation type="journal article" date="2004" name="Genome Res.">
        <title>The status, quality, and expansion of the NIH full-length cDNA project: the Mammalian Gene Collection (MGC).</title>
        <authorList>
            <consortium name="The MGC Project Team"/>
        </authorList>
    </citation>
    <scope>NUCLEOTIDE SEQUENCE [LARGE SCALE MRNA] (ISOFORMS 1 AND 3)</scope>
    <source>
        <strain evidence="9">C57BL/6J</strain>
        <tissue evidence="9">Head</tissue>
        <tissue evidence="8">Retina</tissue>
    </source>
</reference>
<reference evidence="7 10" key="3">
    <citation type="journal article" date="2005" name="Science">
        <title>The transcriptional landscape of the mammalian genome.</title>
        <authorList>
            <person name="Carninci P."/>
            <person name="Kasukawa T."/>
            <person name="Katayama S."/>
            <person name="Gough J."/>
            <person name="Frith M.C."/>
            <person name="Maeda N."/>
            <person name="Oyama R."/>
            <person name="Ravasi T."/>
            <person name="Lenhard B."/>
            <person name="Wells C."/>
            <person name="Kodzius R."/>
            <person name="Shimokawa K."/>
            <person name="Bajic V.B."/>
            <person name="Brenner S.E."/>
            <person name="Batalov S."/>
            <person name="Forrest A.R."/>
            <person name="Zavolan M."/>
            <person name="Davis M.J."/>
            <person name="Wilming L.G."/>
            <person name="Aidinis V."/>
            <person name="Allen J.E."/>
            <person name="Ambesi-Impiombato A."/>
            <person name="Apweiler R."/>
            <person name="Aturaliya R.N."/>
            <person name="Bailey T.L."/>
            <person name="Bansal M."/>
            <person name="Baxter L."/>
            <person name="Beisel K.W."/>
            <person name="Bersano T."/>
            <person name="Bono H."/>
            <person name="Chalk A.M."/>
            <person name="Chiu K.P."/>
            <person name="Choudhary V."/>
            <person name="Christoffels A."/>
            <person name="Clutterbuck D.R."/>
            <person name="Crowe M.L."/>
            <person name="Dalla E."/>
            <person name="Dalrymple B.P."/>
            <person name="de Bono B."/>
            <person name="Della Gatta G."/>
            <person name="di Bernardo D."/>
            <person name="Down T."/>
            <person name="Engstrom P."/>
            <person name="Fagiolini M."/>
            <person name="Faulkner G."/>
            <person name="Fletcher C.F."/>
            <person name="Fukushima T."/>
            <person name="Furuno M."/>
            <person name="Futaki S."/>
            <person name="Gariboldi M."/>
            <person name="Georgii-Hemming P."/>
            <person name="Gingeras T.R."/>
            <person name="Gojobori T."/>
            <person name="Green R.E."/>
            <person name="Gustincich S."/>
            <person name="Harbers M."/>
            <person name="Hayashi Y."/>
            <person name="Hensch T.K."/>
            <person name="Hirokawa N."/>
            <person name="Hill D."/>
            <person name="Huminiecki L."/>
            <person name="Iacono M."/>
            <person name="Ikeo K."/>
            <person name="Iwama A."/>
            <person name="Ishikawa T."/>
            <person name="Jakt M."/>
            <person name="Kanapin A."/>
            <person name="Katoh M."/>
            <person name="Kawasawa Y."/>
            <person name="Kelso J."/>
            <person name="Kitamura H."/>
            <person name="Kitano H."/>
            <person name="Kollias G."/>
            <person name="Krishnan S.P."/>
            <person name="Kruger A."/>
            <person name="Kummerfeld S.K."/>
            <person name="Kurochkin I.V."/>
            <person name="Lareau L.F."/>
            <person name="Lazarevic D."/>
            <person name="Lipovich L."/>
            <person name="Liu J."/>
            <person name="Liuni S."/>
            <person name="McWilliam S."/>
            <person name="Madan Babu M."/>
            <person name="Madera M."/>
            <person name="Marchionni L."/>
            <person name="Matsuda H."/>
            <person name="Matsuzawa S."/>
            <person name="Miki H."/>
            <person name="Mignone F."/>
            <person name="Miyake S."/>
            <person name="Morris K."/>
            <person name="Mottagui-Tabar S."/>
            <person name="Mulder N."/>
            <person name="Nakano N."/>
            <person name="Nakauchi H."/>
            <person name="Ng P."/>
            <person name="Nilsson R."/>
            <person name="Nishiguchi S."/>
            <person name="Nishikawa S."/>
            <person name="Nori F."/>
            <person name="Ohara O."/>
            <person name="Okazaki Y."/>
            <person name="Orlando V."/>
            <person name="Pang K.C."/>
            <person name="Pavan W.J."/>
            <person name="Pavesi G."/>
            <person name="Pesole G."/>
            <person name="Petrovsky N."/>
            <person name="Piazza S."/>
            <person name="Reed J."/>
            <person name="Reid J.F."/>
            <person name="Ring B.Z."/>
            <person name="Ringwald M."/>
            <person name="Rost B."/>
            <person name="Ruan Y."/>
            <person name="Salzberg S.L."/>
            <person name="Sandelin A."/>
            <person name="Schneider C."/>
            <person name="Schoenbach C."/>
            <person name="Sekiguchi K."/>
            <person name="Semple C.A."/>
            <person name="Seno S."/>
            <person name="Sessa L."/>
            <person name="Sheng Y."/>
            <person name="Shibata Y."/>
            <person name="Shimada H."/>
            <person name="Shimada K."/>
            <person name="Silva D."/>
            <person name="Sinclair B."/>
            <person name="Sperling S."/>
            <person name="Stupka E."/>
            <person name="Sugiura K."/>
            <person name="Sultana R."/>
            <person name="Takenaka Y."/>
            <person name="Taki K."/>
            <person name="Tammoja K."/>
            <person name="Tan S.L."/>
            <person name="Tang S."/>
            <person name="Taylor M.S."/>
            <person name="Tegner J."/>
            <person name="Teichmann S.A."/>
            <person name="Ueda H.R."/>
            <person name="van Nimwegen E."/>
            <person name="Verardo R."/>
            <person name="Wei C.L."/>
            <person name="Yagi K."/>
            <person name="Yamanishi H."/>
            <person name="Zabarovsky E."/>
            <person name="Zhu S."/>
            <person name="Zimmer A."/>
            <person name="Hide W."/>
            <person name="Bult C."/>
            <person name="Grimmond S.M."/>
            <person name="Teasdale R.D."/>
            <person name="Liu E.T."/>
            <person name="Brusic V."/>
            <person name="Quackenbush J."/>
            <person name="Wahlestedt C."/>
            <person name="Mattick J.S."/>
            <person name="Hume D.A."/>
            <person name="Kai C."/>
            <person name="Sasaki D."/>
            <person name="Tomaru Y."/>
            <person name="Fukuda S."/>
            <person name="Kanamori-Katayama M."/>
            <person name="Suzuki M."/>
            <person name="Aoki J."/>
            <person name="Arakawa T."/>
            <person name="Iida J."/>
            <person name="Imamura K."/>
            <person name="Itoh M."/>
            <person name="Kato T."/>
            <person name="Kawaji H."/>
            <person name="Kawagashira N."/>
            <person name="Kawashima T."/>
            <person name="Kojima M."/>
            <person name="Kondo S."/>
            <person name="Konno H."/>
            <person name="Nakano K."/>
            <person name="Ninomiya N."/>
            <person name="Nishio T."/>
            <person name="Okada M."/>
            <person name="Plessy C."/>
            <person name="Shibata K."/>
            <person name="Shiraki T."/>
            <person name="Suzuki S."/>
            <person name="Tagami M."/>
            <person name="Waki K."/>
            <person name="Watahiki A."/>
            <person name="Okamura-Oho Y."/>
            <person name="Suzuki H."/>
            <person name="Kawai J."/>
            <person name="Hayashizaki Y."/>
        </authorList>
    </citation>
    <scope>NUCLEOTIDE SEQUENCE [LARGE SCALE MRNA] OF 1-980 (ISOFORMS 1/2/3)</scope>
    <source>
        <strain evidence="10">C57BL/6J</strain>
        <tissue evidence="11">Bone marrow macrophage</tissue>
        <tissue evidence="12">Lung</tissue>
        <tissue evidence="10">Testis</tissue>
    </source>
</reference>
<reference key="4">
    <citation type="journal article" date="2010" name="Cell">
        <title>A tissue-specific atlas of mouse protein phosphorylation and expression.</title>
        <authorList>
            <person name="Huttlin E.L."/>
            <person name="Jedrychowski M.P."/>
            <person name="Elias J.E."/>
            <person name="Goswami T."/>
            <person name="Rad R."/>
            <person name="Beausoleil S.A."/>
            <person name="Villen J."/>
            <person name="Haas W."/>
            <person name="Sowa M.E."/>
            <person name="Gygi S.P."/>
        </authorList>
    </citation>
    <scope>PHOSPHORYLATION [LARGE SCALE ANALYSIS] AT SER-1861</scope>
    <scope>IDENTIFICATION BY MASS SPECTROMETRY [LARGE SCALE ANALYSIS]</scope>
    <source>
        <tissue>Brain</tissue>
        <tissue>Brown adipose tissue</tissue>
        <tissue>Heart</tissue>
        <tissue>Kidney</tissue>
        <tissue>Liver</tissue>
        <tissue>Lung</tissue>
        <tissue>Pancreas</tissue>
        <tissue>Spleen</tissue>
        <tissue>Testis</tissue>
    </source>
</reference>
<reference key="5">
    <citation type="journal article" date="2011" name="J. Cell Biol.">
        <title>SLAIN2 links microtubule plus end-tracking proteins and controls microtubule growth in interphase.</title>
        <authorList>
            <person name="van der Vaart B."/>
            <person name="Manatschal C."/>
            <person name="Grigoriev I."/>
            <person name="Olieric V."/>
            <person name="Gouveia S.M."/>
            <person name="Bjelic S."/>
            <person name="Demmers J."/>
            <person name="Vorobjev I."/>
            <person name="Hoogenraad C.C."/>
            <person name="Steinmetz M.O."/>
            <person name="Akhmanova A."/>
        </authorList>
    </citation>
    <scope>INTERACTION WITH SLAIN1</scope>
    <scope>IDENTIFICATION BY MASS SPECTROMETRY</scope>
</reference>
<dbReference type="EMBL" id="AL691489">
    <property type="status" value="NOT_ANNOTATED_CDS"/>
    <property type="molecule type" value="Genomic_DNA"/>
</dbReference>
<dbReference type="EMBL" id="BC017140">
    <property type="protein sequence ID" value="AAH17140.1"/>
    <property type="status" value="ALT_SEQ"/>
    <property type="molecule type" value="mRNA"/>
</dbReference>
<dbReference type="EMBL" id="BC089032">
    <property type="protein sequence ID" value="AAH89032.1"/>
    <property type="molecule type" value="mRNA"/>
</dbReference>
<dbReference type="EMBL" id="BC096422">
    <property type="protein sequence ID" value="AAH96422.1"/>
    <property type="molecule type" value="mRNA"/>
</dbReference>
<dbReference type="EMBL" id="BC138334">
    <property type="protein sequence ID" value="AAI38335.1"/>
    <property type="molecule type" value="mRNA"/>
</dbReference>
<dbReference type="EMBL" id="AK015282">
    <property type="protein sequence ID" value="BAB29779.1"/>
    <property type="molecule type" value="mRNA"/>
</dbReference>
<dbReference type="EMBL" id="AK149854">
    <property type="protein sequence ID" value="BAE29125.1"/>
    <property type="molecule type" value="mRNA"/>
</dbReference>
<dbReference type="EMBL" id="AK165862">
    <property type="protein sequence ID" value="BAE38422.1"/>
    <property type="molecule type" value="mRNA"/>
</dbReference>
<dbReference type="CCDS" id="CCDS16433.1">
    <molecule id="A2AGT5-3"/>
</dbReference>
<dbReference type="CCDS" id="CCDS50640.1">
    <molecule id="A2AGT5-1"/>
</dbReference>
<dbReference type="RefSeq" id="NP_083713.2">
    <property type="nucleotide sequence ID" value="NM_029437.2"/>
</dbReference>
<dbReference type="BioGRID" id="217741">
    <property type="interactions" value="59"/>
</dbReference>
<dbReference type="FunCoup" id="A2AGT5">
    <property type="interactions" value="3088"/>
</dbReference>
<dbReference type="IntAct" id="A2AGT5">
    <property type="interactions" value="34"/>
</dbReference>
<dbReference type="MINT" id="A2AGT5"/>
<dbReference type="STRING" id="10090.ENSMUSP00000106970"/>
<dbReference type="GlyGen" id="A2AGT5">
    <property type="glycosylation" value="5 sites, 1 N-linked glycan (1 site), 1 O-linked glycan (2 sites)"/>
</dbReference>
<dbReference type="iPTMnet" id="A2AGT5"/>
<dbReference type="PhosphoSitePlus" id="A2AGT5"/>
<dbReference type="SwissPalm" id="A2AGT5"/>
<dbReference type="jPOST" id="A2AGT5"/>
<dbReference type="PaxDb" id="10090-ENSMUSP00000106970"/>
<dbReference type="PeptideAtlas" id="A2AGT5"/>
<dbReference type="ProteomicsDB" id="283624">
    <molecule id="A2AGT5-1"/>
</dbReference>
<dbReference type="ProteomicsDB" id="283625">
    <molecule id="A2AGT5-2"/>
</dbReference>
<dbReference type="ProteomicsDB" id="283626">
    <molecule id="A2AGT5-3"/>
</dbReference>
<dbReference type="Pumba" id="A2AGT5"/>
<dbReference type="DNASU" id="75786"/>
<dbReference type="GeneID" id="75786"/>
<dbReference type="KEGG" id="mmu:75786"/>
<dbReference type="UCSC" id="uc008kwd.1">
    <molecule id="A2AGT5-3"/>
    <property type="organism name" value="mouse"/>
</dbReference>
<dbReference type="AGR" id="MGI:1923036"/>
<dbReference type="CTD" id="9793"/>
<dbReference type="MGI" id="MGI:1923036">
    <property type="gene designation" value="Ckap5"/>
</dbReference>
<dbReference type="eggNOG" id="KOG1820">
    <property type="taxonomic scope" value="Eukaryota"/>
</dbReference>
<dbReference type="InParanoid" id="A2AGT5"/>
<dbReference type="OrthoDB" id="205662at2759"/>
<dbReference type="PhylomeDB" id="A2AGT5"/>
<dbReference type="Reactome" id="R-MMU-141444">
    <property type="pathway name" value="Amplification of signal from unattached kinetochores via a MAD2 inhibitory signal"/>
</dbReference>
<dbReference type="Reactome" id="R-MMU-2467813">
    <property type="pathway name" value="Separation of Sister Chromatids"/>
</dbReference>
<dbReference type="Reactome" id="R-MMU-2500257">
    <property type="pathway name" value="Resolution of Sister Chromatid Cohesion"/>
</dbReference>
<dbReference type="Reactome" id="R-MMU-2565942">
    <property type="pathway name" value="Regulation of PLK1 Activity at G2/M Transition"/>
</dbReference>
<dbReference type="Reactome" id="R-MMU-380259">
    <property type="pathway name" value="Loss of Nlp from mitotic centrosomes"/>
</dbReference>
<dbReference type="Reactome" id="R-MMU-380270">
    <property type="pathway name" value="Recruitment of mitotic centrosome proteins and complexes"/>
</dbReference>
<dbReference type="Reactome" id="R-MMU-380284">
    <property type="pathway name" value="Loss of proteins required for interphase microtubule organization from the centrosome"/>
</dbReference>
<dbReference type="Reactome" id="R-MMU-380320">
    <property type="pathway name" value="Recruitment of NuMA to mitotic centrosomes"/>
</dbReference>
<dbReference type="Reactome" id="R-MMU-5620912">
    <property type="pathway name" value="Anchoring of the basal body to the plasma membrane"/>
</dbReference>
<dbReference type="Reactome" id="R-MMU-5663220">
    <property type="pathway name" value="RHO GTPases Activate Formins"/>
</dbReference>
<dbReference type="Reactome" id="R-MMU-68877">
    <property type="pathway name" value="Mitotic Prometaphase"/>
</dbReference>
<dbReference type="Reactome" id="R-MMU-8854518">
    <property type="pathway name" value="AURKA Activation by TPX2"/>
</dbReference>
<dbReference type="Reactome" id="R-MMU-9648025">
    <property type="pathway name" value="EML4 and NUDC in mitotic spindle formation"/>
</dbReference>
<dbReference type="BioGRID-ORCS" id="75786">
    <property type="hits" value="26 hits in 77 CRISPR screens"/>
</dbReference>
<dbReference type="CD-CODE" id="CE726F99">
    <property type="entry name" value="Postsynaptic density"/>
</dbReference>
<dbReference type="ChiTaRS" id="Ckap5">
    <property type="organism name" value="mouse"/>
</dbReference>
<dbReference type="PRO" id="PR:A2AGT5"/>
<dbReference type="Proteomes" id="UP000000589">
    <property type="component" value="Unplaced"/>
</dbReference>
<dbReference type="RNAct" id="A2AGT5">
    <property type="molecule type" value="protein"/>
</dbReference>
<dbReference type="GO" id="GO:0005813">
    <property type="term" value="C:centrosome"/>
    <property type="evidence" value="ECO:0007669"/>
    <property type="project" value="UniProtKB-SubCell"/>
</dbReference>
<dbReference type="GO" id="GO:0005737">
    <property type="term" value="C:cytoplasm"/>
    <property type="evidence" value="ECO:0000266"/>
    <property type="project" value="MGI"/>
</dbReference>
<dbReference type="GO" id="GO:0030425">
    <property type="term" value="C:dendrite"/>
    <property type="evidence" value="ECO:0000314"/>
    <property type="project" value="MGI"/>
</dbReference>
<dbReference type="GO" id="GO:0000776">
    <property type="term" value="C:kinetochore"/>
    <property type="evidence" value="ECO:0007669"/>
    <property type="project" value="UniProtKB-KW"/>
</dbReference>
<dbReference type="GO" id="GO:0071598">
    <property type="term" value="C:neuronal ribonucleoprotein granule"/>
    <property type="evidence" value="ECO:0000314"/>
    <property type="project" value="MGI"/>
</dbReference>
<dbReference type="GO" id="GO:0043204">
    <property type="term" value="C:perikaryon"/>
    <property type="evidence" value="ECO:0000314"/>
    <property type="project" value="MGI"/>
</dbReference>
<dbReference type="GO" id="GO:0098794">
    <property type="term" value="C:postsynapse"/>
    <property type="evidence" value="ECO:0007669"/>
    <property type="project" value="GOC"/>
</dbReference>
<dbReference type="GO" id="GO:0032991">
    <property type="term" value="C:protein-containing complex"/>
    <property type="evidence" value="ECO:0000266"/>
    <property type="project" value="MGI"/>
</dbReference>
<dbReference type="GO" id="GO:0000922">
    <property type="term" value="C:spindle pole"/>
    <property type="evidence" value="ECO:0007669"/>
    <property type="project" value="UniProtKB-SubCell"/>
</dbReference>
<dbReference type="GO" id="GO:0008017">
    <property type="term" value="F:microtubule binding"/>
    <property type="evidence" value="ECO:0000266"/>
    <property type="project" value="MGI"/>
</dbReference>
<dbReference type="GO" id="GO:0061863">
    <property type="term" value="F:microtubule plus end polymerase"/>
    <property type="evidence" value="ECO:0007669"/>
    <property type="project" value="InterPro"/>
</dbReference>
<dbReference type="GO" id="GO:0051010">
    <property type="term" value="F:microtubule plus-end binding"/>
    <property type="evidence" value="ECO:0007669"/>
    <property type="project" value="InterPro"/>
</dbReference>
<dbReference type="GO" id="GO:0043021">
    <property type="term" value="F:ribonucleoprotein complex binding"/>
    <property type="evidence" value="ECO:0000266"/>
    <property type="project" value="MGI"/>
</dbReference>
<dbReference type="GO" id="GO:0051301">
    <property type="term" value="P:cell division"/>
    <property type="evidence" value="ECO:0007669"/>
    <property type="project" value="UniProtKB-KW"/>
</dbReference>
<dbReference type="GO" id="GO:0032289">
    <property type="term" value="P:central nervous system myelin formation"/>
    <property type="evidence" value="ECO:0000315"/>
    <property type="project" value="MGI"/>
</dbReference>
<dbReference type="GO" id="GO:0007098">
    <property type="term" value="P:centrosome cycle"/>
    <property type="evidence" value="ECO:0000266"/>
    <property type="project" value="MGI"/>
</dbReference>
<dbReference type="GO" id="GO:0002181">
    <property type="term" value="P:cytoplasmic translation"/>
    <property type="evidence" value="ECO:0000314"/>
    <property type="project" value="MGI"/>
</dbReference>
<dbReference type="GO" id="GO:0097062">
    <property type="term" value="P:dendritic spine maintenance"/>
    <property type="evidence" value="ECO:0000315"/>
    <property type="project" value="MGI"/>
</dbReference>
<dbReference type="GO" id="GO:0030951">
    <property type="term" value="P:establishment or maintenance of microtubule cytoskeleton polarity"/>
    <property type="evidence" value="ECO:0007669"/>
    <property type="project" value="InterPro"/>
</dbReference>
<dbReference type="GO" id="GO:0060079">
    <property type="term" value="P:excitatory postsynaptic potential"/>
    <property type="evidence" value="ECO:0000315"/>
    <property type="project" value="MGI"/>
</dbReference>
<dbReference type="GO" id="GO:0046959">
    <property type="term" value="P:habituation"/>
    <property type="evidence" value="ECO:0000315"/>
    <property type="project" value="MGI"/>
</dbReference>
<dbReference type="GO" id="GO:0007626">
    <property type="term" value="P:locomotory behavior"/>
    <property type="evidence" value="ECO:0000315"/>
    <property type="project" value="MGI"/>
</dbReference>
<dbReference type="GO" id="GO:0060291">
    <property type="term" value="P:long-term synaptic potentiation"/>
    <property type="evidence" value="ECO:0000315"/>
    <property type="project" value="MGI"/>
</dbReference>
<dbReference type="GO" id="GO:0046785">
    <property type="term" value="P:microtubule polymerization"/>
    <property type="evidence" value="ECO:0007669"/>
    <property type="project" value="InterPro"/>
</dbReference>
<dbReference type="GO" id="GO:0010609">
    <property type="term" value="P:mRNA localization resulting in post-transcriptional regulation of gene expression"/>
    <property type="evidence" value="ECO:0000315"/>
    <property type="project" value="MGI"/>
</dbReference>
<dbReference type="GO" id="GO:0045807">
    <property type="term" value="P:positive regulation of endocytosis"/>
    <property type="evidence" value="ECO:0000315"/>
    <property type="project" value="MGI"/>
</dbReference>
<dbReference type="GO" id="GO:0022618">
    <property type="term" value="P:protein-RNA complex assembly"/>
    <property type="evidence" value="ECO:0000314"/>
    <property type="project" value="MGI"/>
</dbReference>
<dbReference type="GO" id="GO:0050658">
    <property type="term" value="P:RNA transport"/>
    <property type="evidence" value="ECO:0000250"/>
    <property type="project" value="UniProtKB"/>
</dbReference>
<dbReference type="GO" id="GO:0007051">
    <property type="term" value="P:spindle organization"/>
    <property type="evidence" value="ECO:0007669"/>
    <property type="project" value="InterPro"/>
</dbReference>
<dbReference type="GO" id="GO:0008542">
    <property type="term" value="P:visual learning"/>
    <property type="evidence" value="ECO:0000315"/>
    <property type="project" value="MGI"/>
</dbReference>
<dbReference type="FunFam" id="1.25.10.10:FF:000052">
    <property type="entry name" value="Cytoskeleton associated protein 5"/>
    <property type="match status" value="1"/>
</dbReference>
<dbReference type="FunFam" id="1.25.10.10:FF:000019">
    <property type="entry name" value="Cytoskeleton-associated protein 5"/>
    <property type="match status" value="1"/>
</dbReference>
<dbReference type="FunFam" id="1.25.10.10:FF:000050">
    <property type="entry name" value="Cytoskeleton-associated protein 5 isoform X1"/>
    <property type="match status" value="1"/>
</dbReference>
<dbReference type="FunFam" id="1.25.10.10:FF:000068">
    <property type="entry name" value="cytoskeleton-associated protein 5 isoform X1"/>
    <property type="match status" value="1"/>
</dbReference>
<dbReference type="FunFam" id="1.25.10.10:FF:000063">
    <property type="entry name" value="Putative cytoskeleton-associated protein 5"/>
    <property type="match status" value="1"/>
</dbReference>
<dbReference type="Gene3D" id="1.25.10.10">
    <property type="entry name" value="Leucine-rich Repeat Variant"/>
    <property type="match status" value="5"/>
</dbReference>
<dbReference type="InterPro" id="IPR011989">
    <property type="entry name" value="ARM-like"/>
</dbReference>
<dbReference type="InterPro" id="IPR016024">
    <property type="entry name" value="ARM-type_fold"/>
</dbReference>
<dbReference type="InterPro" id="IPR024395">
    <property type="entry name" value="CLASP_N_dom"/>
</dbReference>
<dbReference type="InterPro" id="IPR021133">
    <property type="entry name" value="HEAT_type_2"/>
</dbReference>
<dbReference type="InterPro" id="IPR034085">
    <property type="entry name" value="TOG"/>
</dbReference>
<dbReference type="InterPro" id="IPR045110">
    <property type="entry name" value="XMAP215"/>
</dbReference>
<dbReference type="InterPro" id="IPR048491">
    <property type="entry name" value="XMAP215_CLASP_TOG"/>
</dbReference>
<dbReference type="PANTHER" id="PTHR12609">
    <property type="entry name" value="MICROTUBULE ASSOCIATED PROTEIN XMAP215"/>
    <property type="match status" value="1"/>
</dbReference>
<dbReference type="Pfam" id="PF12348">
    <property type="entry name" value="CLASP_N"/>
    <property type="match status" value="1"/>
</dbReference>
<dbReference type="Pfam" id="PF21041">
    <property type="entry name" value="XMAP215_CLASP_TOG"/>
    <property type="match status" value="4"/>
</dbReference>
<dbReference type="SMART" id="SM01349">
    <property type="entry name" value="TOG"/>
    <property type="match status" value="5"/>
</dbReference>
<dbReference type="SUPFAM" id="SSF48371">
    <property type="entry name" value="ARM repeat"/>
    <property type="match status" value="2"/>
</dbReference>
<dbReference type="PROSITE" id="PS50077">
    <property type="entry name" value="HEAT_REPEAT"/>
    <property type="match status" value="1"/>
</dbReference>
<proteinExistence type="evidence at protein level"/>
<feature type="chain" id="PRO_0000364005" description="Cytoskeleton-associated protein 5">
    <location>
        <begin position="1"/>
        <end position="2032"/>
    </location>
</feature>
<feature type="repeat" description="HEAT 1" evidence="2">
    <location>
        <begin position="159"/>
        <end position="197"/>
    </location>
</feature>
<feature type="repeat" description="HEAT 2" evidence="2">
    <location>
        <begin position="356"/>
        <end position="394"/>
    </location>
</feature>
<feature type="repeat" description="HEAT 3" evidence="2">
    <location>
        <begin position="434"/>
        <end position="472"/>
    </location>
</feature>
<feature type="repeat" description="HEAT 4" evidence="2">
    <location>
        <begin position="750"/>
        <end position="788"/>
    </location>
</feature>
<feature type="repeat" description="HEAT 5" evidence="2">
    <location>
        <begin position="855"/>
        <end position="893"/>
    </location>
</feature>
<feature type="repeat" description="HEAT 6" evidence="2">
    <location>
        <begin position="936"/>
        <end position="974"/>
    </location>
</feature>
<feature type="repeat" description="HEAT 7" evidence="2">
    <location>
        <begin position="1013"/>
        <end position="1051"/>
    </location>
</feature>
<feature type="repeat" description="HEAT 8" evidence="2">
    <location>
        <begin position="1284"/>
        <end position="1322"/>
    </location>
</feature>
<feature type="repeat" description="HEAT 9" evidence="2">
    <location>
        <begin position="1324"/>
        <end position="1357"/>
    </location>
</feature>
<feature type="repeat" description="HEAT 10" evidence="2">
    <location>
        <begin position="1361"/>
        <end position="1399"/>
    </location>
</feature>
<feature type="region of interest" description="TOG 1" evidence="1">
    <location>
        <begin position="1"/>
        <end position="223"/>
    </location>
</feature>
<feature type="region of interest" description="TOG 2" evidence="1">
    <location>
        <begin position="268"/>
        <end position="502"/>
    </location>
</feature>
<feature type="region of interest" description="Disordered" evidence="3">
    <location>
        <begin position="501"/>
        <end position="579"/>
    </location>
</feature>
<feature type="region of interest" description="TOG 3" evidence="1">
    <location>
        <begin position="588"/>
        <end position="817"/>
    </location>
</feature>
<feature type="region of interest" description="Disordered" evidence="3">
    <location>
        <begin position="811"/>
        <end position="848"/>
    </location>
</feature>
<feature type="region of interest" description="TOG 4" evidence="1">
    <location>
        <begin position="853"/>
        <end position="1081"/>
    </location>
</feature>
<feature type="region of interest" description="Disordered" evidence="3">
    <location>
        <begin position="1078"/>
        <end position="1156"/>
    </location>
</feature>
<feature type="region of interest" description="TOG 5" evidence="1">
    <location>
        <begin position="1193"/>
        <end position="1428"/>
    </location>
</feature>
<feature type="region of interest" description="Disordered" evidence="3">
    <location>
        <begin position="1420"/>
        <end position="1459"/>
    </location>
</feature>
<feature type="region of interest" description="Disordered" evidence="3">
    <location>
        <begin position="1801"/>
        <end position="1822"/>
    </location>
</feature>
<feature type="region of interest" description="Disordered" evidence="3">
    <location>
        <begin position="1893"/>
        <end position="1926"/>
    </location>
</feature>
<feature type="region of interest" description="Interaction with TACC3" evidence="1">
    <location>
        <begin position="1932"/>
        <end position="1957"/>
    </location>
</feature>
<feature type="region of interest" description="Disordered" evidence="3">
    <location>
        <begin position="1948"/>
        <end position="2032"/>
    </location>
</feature>
<feature type="compositionally biased region" description="Acidic residues" evidence="3">
    <location>
        <begin position="833"/>
        <end position="842"/>
    </location>
</feature>
<feature type="compositionally biased region" description="Low complexity" evidence="3">
    <location>
        <begin position="1078"/>
        <end position="1095"/>
    </location>
</feature>
<feature type="compositionally biased region" description="Polar residues" evidence="3">
    <location>
        <begin position="1441"/>
        <end position="1450"/>
    </location>
</feature>
<feature type="compositionally biased region" description="Basic and acidic residues" evidence="3">
    <location>
        <begin position="1808"/>
        <end position="1822"/>
    </location>
</feature>
<feature type="compositionally biased region" description="Low complexity" evidence="3">
    <location>
        <begin position="1909"/>
        <end position="1921"/>
    </location>
</feature>
<feature type="compositionally biased region" description="Polar residues" evidence="3">
    <location>
        <begin position="1972"/>
        <end position="1983"/>
    </location>
</feature>
<feature type="compositionally biased region" description="Basic and acidic residues" evidence="3">
    <location>
        <begin position="1984"/>
        <end position="1997"/>
    </location>
</feature>
<feature type="compositionally biased region" description="Low complexity" evidence="3">
    <location>
        <begin position="2002"/>
        <end position="2015"/>
    </location>
</feature>
<feature type="compositionally biased region" description="Basic and acidic residues" evidence="3">
    <location>
        <begin position="2018"/>
        <end position="2032"/>
    </location>
</feature>
<feature type="modified residue" description="N6-acetyllysine" evidence="1">
    <location>
        <position position="48"/>
    </location>
</feature>
<feature type="modified residue" description="Phosphoserine" evidence="1">
    <location>
        <position position="816"/>
    </location>
</feature>
<feature type="modified residue" description="Phosphoserine" evidence="1">
    <location>
        <position position="1469"/>
    </location>
</feature>
<feature type="modified residue" description="Phosphoserine" evidence="14">
    <location>
        <position position="1861"/>
    </location>
</feature>
<feature type="splice variant" id="VSP_053003" description="In isoform 2." evidence="7">
    <location>
        <begin position="1564"/>
        <end position="1623"/>
    </location>
</feature>
<feature type="splice variant" id="VSP_053004" description="In isoform 3." evidence="6">
    <location>
        <begin position="1903"/>
        <end position="1923"/>
    </location>
</feature>
<feature type="sequence conflict" description="In Ref. 3; BAE38422." evidence="7" ref="3">
    <original>S</original>
    <variation>C</variation>
    <location>
        <position position="5"/>
    </location>
</feature>
<feature type="sequence conflict" description="In Ref. 3; BAB29779." evidence="7" ref="3">
    <original>K</original>
    <variation>N</variation>
    <location>
        <position position="19"/>
    </location>
</feature>
<feature type="sequence conflict" description="In Ref. 3; BAB29779." evidence="7" ref="3">
    <original>E</original>
    <variation>K</variation>
    <location>
        <position position="111"/>
    </location>
</feature>
<feature type="sequence conflict" description="In Ref. 3; BAE38422." evidence="7" ref="3">
    <original>E</original>
    <variation>G</variation>
    <location>
        <position position="174"/>
    </location>
</feature>
<feature type="sequence conflict" description="In Ref. 3; BAB29779." evidence="7" ref="3">
    <original>K</original>
    <variation>R</variation>
    <location>
        <position position="227"/>
    </location>
</feature>
<feature type="sequence conflict" description="In Ref. 3; BAB29779." evidence="7" ref="3">
    <original>A</original>
    <variation>T</variation>
    <location>
        <position position="522"/>
    </location>
</feature>
<feature type="sequence conflict" description="In Ref. 3; BAB29779." evidence="7" ref="3">
    <original>E</original>
    <variation>Q</variation>
    <location>
        <position position="581"/>
    </location>
</feature>
<feature type="sequence conflict" description="In Ref. 3; BAB29779." evidence="7" ref="3">
    <original>S</original>
    <variation>F</variation>
    <location>
        <position position="675"/>
    </location>
</feature>
<feature type="sequence conflict" description="In Ref. 3; BAB29779." evidence="7" ref="3">
    <original>A</original>
    <variation>G</variation>
    <location>
        <position position="709"/>
    </location>
</feature>
<feature type="sequence conflict" description="In Ref. 3; BAE29125." evidence="7" ref="3">
    <original>E</original>
    <variation>V</variation>
    <location>
        <position position="836"/>
    </location>
</feature>
<feature type="sequence conflict" description="In Ref. 2; AAH89032." evidence="7" ref="2">
    <original>E</original>
    <variation>A</variation>
    <location>
        <position position="981"/>
    </location>
</feature>
<feature type="sequence conflict" description="In Ref. 2; AAH89032/AAH96422/AAI38335." evidence="7" ref="2">
    <original>K</original>
    <variation>E</variation>
    <location>
        <position position="1028"/>
    </location>
</feature>
<feature type="sequence conflict" description="In Ref. 2; AAH96422." evidence="7" ref="2">
    <original>V</original>
    <variation>F</variation>
    <location>
        <position position="1717"/>
    </location>
</feature>
<comment type="function">
    <text evidence="1">Binds to the plus end of microtubules and regulates microtubule dynamics and microtubule organization. Acts as a processive microtubule polymerase. Promotes cytoplasmic microtubule nucleation and elongation. Plays a major role in organizing spindle poles. In spindle formation protects kinetochore microtubules from depolymerization by KIF2C and has an essential role in centrosomal microtubule assembly independently of KIF2C activity. Contributes to centrosome integrity. Acts as a component of the TACC3/ch-TOG/clathrin complex proposed to contribute to stabilization of kinetochore fibers of the mitotic spindle by acting as inter-microtubule bridge. The TACC3/ch-TOG/clathrin complex is required for the maintenance of kinetochore fiber tension. Enhances the strength of NDC80 complex-mediated kinetochore-tip microtubule attachments.</text>
</comment>
<comment type="subunit">
    <text evidence="1 5">Interacts with TACC1. Interacts with HNRNPA2B1. Interacts with TACC3 independently of clathrin. Interacts with TACC3 and clathrin forming the TACC3/ch-TOG/clathrin complex located at spindle inter-microtubules bridges. Interacts with NDC80; indicative for an association with the NDC80 complex. Interacts with SLAIN2 (By similarity). Interacts with SLAIN1 (PubMed:21646404).</text>
</comment>
<comment type="subcellular location">
    <subcellularLocation>
        <location evidence="1">Cytoplasm</location>
        <location evidence="1">Cytoskeleton</location>
        <location evidence="1">Microtubule organizing center</location>
        <location evidence="1">Centrosome</location>
    </subcellularLocation>
    <subcellularLocation>
        <location evidence="1">Cytoplasm</location>
        <location evidence="1">Cytoskeleton</location>
        <location evidence="1">Spindle pole</location>
    </subcellularLocation>
    <subcellularLocation>
        <location evidence="1">Cytoplasm</location>
        <location evidence="1">Cytoskeleton</location>
        <location evidence="1">Spindle</location>
    </subcellularLocation>
    <subcellularLocation>
        <location evidence="1">Chromosome</location>
        <location evidence="1">Centromere</location>
        <location evidence="1">Kinetochore</location>
    </subcellularLocation>
    <text evidence="1">Detected on centrosomes and kinetochores during interphase and mitosis independently from TACC3 and clathrin. Located to spindle poles and microtubules during mitosis. In complex with TACC3 localized to microtubule plus-ends in mitosis and interphase. In complex with TACC3 and clathrin localized to inter-microtubule bridges in mitotic spindles. Accumulation sites at microtubule plus ends protruded approximately 100 nm from MAPRE1/EB1 sites in interphase cells.</text>
</comment>
<comment type="alternative products">
    <event type="alternative splicing"/>
    <isoform>
        <id>A2AGT5-1</id>
        <name evidence="4">1</name>
        <sequence type="displayed"/>
    </isoform>
    <isoform>
        <id>A2AGT5-2</id>
        <name>2</name>
        <sequence type="described" ref="VSP_053003"/>
    </isoform>
    <isoform>
        <id>A2AGT5-3</id>
        <name evidence="4">3</name>
        <sequence type="described" ref="VSP_053004"/>
    </isoform>
</comment>
<comment type="domain">
    <text evidence="1">The TOG (tumor overexpressed gene) domains are arranged in a N-terminal pentameric array with each domain composed of six (for the most part non-canonical) HEAT repeats forming a oblong paddle-like structure. Intra-HEAT loops are positioned along a face of the TOG domain and bind to a single alpha/beta-tubulin heterodimer. The TOG domains in the array seem to be structurally and functionally polarized. Differential functions may range from microtubule (MT) lattice binding and/or free tubulin heterodimer binding to potentiating stable incorporation of tubulin into the MT lattice.</text>
</comment>
<comment type="similarity">
    <text evidence="2">Belongs to the TOG/XMAP215 family.</text>
</comment>
<comment type="sequence caution" evidence="7">
    <conflict type="miscellaneous discrepancy">
        <sequence resource="EMBL-CDS" id="AAH17140"/>
    </conflict>
    <text>Contaminating sequence. Potential poly-A sequence.</text>
</comment>
<gene>
    <name evidence="13" type="primary">Ckap5</name>
</gene>
<sequence length="2032" mass="225635">MGDDSEWLKLPVDQKCEHKLWKARLSGYEEALKIFQKIKDEKSPEWSKYLGLIKKFVTDSNAVVQLKGLEAALVYVENAHVAGKTTGEVVSGVVSKVFNQPKAKAKELGIEICLMYVEIEKGESVQEELLKGLDNKNPKIIVACIETLRKALSEFGSKIISLKPIIKVLPKLFESRDKAVRDEAKLFAIEIYRWNRDAVKHTLQNINSVQLKELEEEWVKLPTGAPKPSRFLRSQQELEAKLEQQQSAGGDAEGGGDDGDEVPQVDAYELLDAVEILSKLPKDFYDKIEAKKWQERKEALEAVEVLVKNPKLEAGDYADLVKALKKVVGKDTNVMLVALAAKCLTGLAVGLRKKFGQYAGHVVPTILEKFKEKKPQVVQALQEAIDAIFLTTTLQNISEDVLAVMDNKNPTIKQQTSLFIARSFRHCTSSTLPKSLLKPFCAALLKHINDSAPEVRDAAFEALGTALKVVGEKSVNPFLADVDKLKLDRIKECSEKVELVHGKKSGLATEKKESKPLPGRAAASGAAGDKDTKDVSGPKPGPLKKTPTAKAGGPSKKGKTTAPGGSASAGTKNKKGLETKEIVEPELSIEVCEEKASAVLPPTCIQLLDSSNWKERLACMEEFQKAVELMERTEMPCQALVKMLAKKPGWKETNFQVMQMKLHIVALIAQKGNFSKTSAQIVLDGLVDKIGDVKCGNNAKEAMTAIAEACMLPWTAEQVMSMAFSQKNPKNQSETLNWLSNAIKEFGFSELNVKAFISNVKTALAATNPAVRTSAITLLGVMYLYVGPSLRMIFEDEKPALLSQIDAEFQKMQGQSPPAPTRGIAKHSTSATDEGEDGEEPGEGGNDVVDLLPRIEISDKITSELVSKIGDKNWKIRKEGLDEVAGIINEAKFIQPNIGELPTALKGRLNDSNKILVQQTLNILQQLAVAMGANIRQHVKNLGIPVITVLGDSKNNVRAAALATVNAWAEQTGMKEWLEGEDLSEELKKENPFLRQELLGWLAEKLPTLRSTPTDLILCVPHLYSCLKDRNGDVRKKAQDALPFFMMHLGYEKMAKATGKLKPTSKDQVLAMLEKAKANMPSKPAAPAKAMSKPMGGSAPAKTQPIPAPVEDSVSSTIEAKPDLKKAKAPGVSSKAKSVQGKKVPSKTTLKEDDDKSGPIFIVVPNGKEQRMRDEKGLKVLKWNFTTPRDEYIEQLKTQMSTCVAKWLQDEMFHSDFQHHNKALAVMVDHLESEKDGVISCLDLILKWLTLRFFDTNTSVLMKALEYLKLLFTLLSEEEYHLTENEASSFIPYLILKVGEPKDVIRKDVRAILNRMCLVYPASKMFPFIMEGTKSKNSKQRAECLEELGCLIESYGMNVCQPTPGKALKEIAIHIGDRDNAVRNAALNTIVTVYNVHGDQVFKLIGNLSEKDMSMLEERIKRSAKRPSAAPVKQAEEKPQRTQNINSNANMLRKGPAEDMSSKLNQARSLSGHPEAAQMVRREFQLDLDEIENDNGTVRCEMPELVQHKLDDIFEPVLIPEPKIRAVSPHFDDMHSNTASTINFIISQVASGDINTSIQALTQIDEVLRQEDKAEAMSGHIDQFLIATFMQLRLIYSTHMADEKLDKDEIIKLYSCIIGNMISLFQIESLAREASTGVLKDLMHGLITLMLDSRIEDLEEGQQVIRSVNLLVVKVLEKSDQTNILSALLVLLQDSLLATASSPKFSELVMKCLWRMVRLLPDTINSINLDRILLDIHIFMKVFPKEKLKQCKSEFPIRTLKTLLHTLCKLKGPKILDHLTMIDNKNESELEAHLCRMMKHSMDQTGSKSDKETEKGASRIDEKSSKAKVNDFLAEIFKKIGSKENTKEGLAELYEYKKKYSDTDIEPFLKNSSQFFQSYVERGLRVIEMERESKGRIPTSTGISPQMEVTCVPTPTSTVSSLGNTNGEEVGPSVYLERLKILRQRCGLDNTKQDDRPPLTSLLSKPAIPPVASSTDMLHSKLSQLRESREQHQHSDLDSNQTHSAGTMTSSSSTTNIDDLKKRLERIKSSRK</sequence>